<evidence type="ECO:0000250" key="1"/>
<evidence type="ECO:0000250" key="2">
    <source>
        <dbReference type="UniProtKB" id="P34998"/>
    </source>
</evidence>
<evidence type="ECO:0000255" key="3"/>
<evidence type="ECO:0000269" key="4">
    <source>
    </source>
</evidence>
<evidence type="ECO:0000305" key="5"/>
<keyword id="KW-1003">Cell membrane</keyword>
<keyword id="KW-1015">Disulfide bond</keyword>
<keyword id="KW-0967">Endosome</keyword>
<keyword id="KW-0297">G-protein coupled receptor</keyword>
<keyword id="KW-0325">Glycoprotein</keyword>
<keyword id="KW-0472">Membrane</keyword>
<keyword id="KW-0597">Phosphoprotein</keyword>
<keyword id="KW-0675">Receptor</keyword>
<keyword id="KW-1185">Reference proteome</keyword>
<keyword id="KW-0732">Signal</keyword>
<keyword id="KW-0807">Transducer</keyword>
<keyword id="KW-0812">Transmembrane</keyword>
<keyword id="KW-1133">Transmembrane helix</keyword>
<protein>
    <recommendedName>
        <fullName>Corticotropin-releasing factor receptor 1</fullName>
        <shortName>CRF-R-1</shortName>
        <shortName>CRF-R1</shortName>
        <shortName>CRFR-1</shortName>
    </recommendedName>
    <alternativeName>
        <fullName>Corticotropin-releasing hormone receptor 1</fullName>
        <shortName>CRH-R-1</shortName>
        <shortName>CRH-R1</shortName>
    </alternativeName>
</protein>
<proteinExistence type="evidence at transcript level"/>
<accession>O62772</accession>
<comment type="function">
    <text evidence="4">G-protein coupled receptor for CRH (corticotropin-releasing factor) and UCN (urocortin). Has high affinity for CRH and UCN. Ligand binding causes a conformation change that triggers signaling via guanine nucleotide-binding proteins (G proteins) and down-stream effectors, such as adenylate cyclase. Promotes the activation of adenylate cyclase, leading to increased intracellular cAMP levels. Inhibits the activity of the calcium channel CACNA1H. Required for normal embryonic development of the adrenal gland and for normal hormonal responses to stress. Plays a role in the response to anxiogenic stimuli.</text>
</comment>
<comment type="subunit">
    <text evidence="1">Heterodimer; heterodimerizes with GPER1. Interacts (via N-terminal extracellular domain) with CRH and UCN. Interacts with DLG1; this inhibits endocytosis of CRHR1 after agonist binding (By similarity).</text>
</comment>
<comment type="subcellular location">
    <subcellularLocation>
        <location evidence="4">Cell membrane</location>
        <topology evidence="4">Multi-pass membrane protein</topology>
    </subcellularLocation>
    <subcellularLocation>
        <location evidence="1">Endosome</location>
    </subcellularLocation>
    <text>Agonist-binding promotes endocytosis.</text>
</comment>
<comment type="domain">
    <text evidence="1">The transmembrane domain is composed of seven transmembrane helices that are arranged in V-shape. Transmembrane helix 7 assumes a sharply kinked structure (By similarity).</text>
</comment>
<comment type="PTM">
    <text>C-terminal Ser or Thr residues may be phosphorylated.</text>
</comment>
<comment type="PTM">
    <text evidence="1">Phosphorylation at Ser-301 by PKA prevents maximal coupling to Gq-protein, and thereby negatively regulates downstream signaling.</text>
</comment>
<comment type="similarity">
    <text evidence="5">Belongs to the G-protein coupled receptor 2 family.</text>
</comment>
<name>CRFR1_SHEEP</name>
<sequence>MGRRPQLRLVKALLLLGLNSISASLQDQHCESLSLASNVSGLQCNASVDLNGTCWPQSPAGQLVVRPCLVFFYGVRYNTTSNGYRVCLANGTWAARVNHSECQEILSEGEKSKAHYHIAVIINYLGHCISLAALLVAFVLFLRLRSIRCVRNIIHWNLISAFILRNATWFVVQLTMSPEVHQSNVGWCRLVTAAYNYFHVTNFFWMFGEGCYLHTAVVLTYSTDRLRKWMFICIGWGVPFPIIVAWAIGKLYYDNEKCWFGKRPGVYTDYIYQGPMILVLLINFIFLFNIVRILMTKLRASTTSETIQYRKAVKATLVLLPLLGITYMLFFVNPGEDEVSRVVFIYFNSFLESFQGFFVSVFYCFLNSEVRSAIRKRWHRWQDKHSIRARVARAMSIPTSPTRVSFHSIKQSTAV</sequence>
<gene>
    <name type="primary">CRHR1</name>
</gene>
<feature type="signal peptide" evidence="3">
    <location>
        <begin position="1"/>
        <end position="23"/>
    </location>
</feature>
<feature type="chain" id="PRO_0000012817" description="Corticotropin-releasing factor receptor 1">
    <location>
        <begin position="24"/>
        <end position="415"/>
    </location>
</feature>
<feature type="topological domain" description="Extracellular" evidence="1">
    <location>
        <begin position="24"/>
        <end position="111"/>
    </location>
</feature>
<feature type="transmembrane region" description="Helical; Name=1" evidence="1">
    <location>
        <begin position="112"/>
        <end position="142"/>
    </location>
</feature>
<feature type="topological domain" description="Cytoplasmic" evidence="1">
    <location>
        <begin position="143"/>
        <end position="149"/>
    </location>
</feature>
<feature type="transmembrane region" description="Helical; Name=2" evidence="1">
    <location>
        <begin position="150"/>
        <end position="174"/>
    </location>
</feature>
<feature type="topological domain" description="Extracellular" evidence="1">
    <location>
        <begin position="175"/>
        <end position="189"/>
    </location>
</feature>
<feature type="transmembrane region" description="Helical; Name=3" evidence="1">
    <location>
        <begin position="190"/>
        <end position="218"/>
    </location>
</feature>
<feature type="topological domain" description="Cytoplasmic" evidence="1">
    <location>
        <begin position="219"/>
        <end position="225"/>
    </location>
</feature>
<feature type="transmembrane region" description="Helical; Name=4" evidence="1">
    <location>
        <begin position="226"/>
        <end position="253"/>
    </location>
</feature>
<feature type="topological domain" description="Extracellular" evidence="1">
    <location>
        <begin position="254"/>
        <end position="269"/>
    </location>
</feature>
<feature type="transmembrane region" description="Helical; Name=5" evidence="1">
    <location>
        <begin position="270"/>
        <end position="295"/>
    </location>
</feature>
<feature type="topological domain" description="Cytoplasmic" evidence="1">
    <location>
        <begin position="296"/>
        <end position="306"/>
    </location>
</feature>
<feature type="transmembrane region" description="Helical; Name=6" evidence="1">
    <location>
        <begin position="307"/>
        <end position="331"/>
    </location>
</feature>
<feature type="topological domain" description="Extracellular" evidence="1">
    <location>
        <begin position="332"/>
        <end position="338"/>
    </location>
</feature>
<feature type="transmembrane region" description="Helical; Name=7" evidence="1">
    <location>
        <begin position="339"/>
        <end position="368"/>
    </location>
</feature>
<feature type="topological domain" description="Cytoplasmic" evidence="1">
    <location>
        <begin position="369"/>
        <end position="415"/>
    </location>
</feature>
<feature type="region of interest" description="Important for peptide agonist binding" evidence="1">
    <location>
        <begin position="99"/>
        <end position="108"/>
    </location>
</feature>
<feature type="region of interest" description="Important for antagonist binding" evidence="1">
    <location>
        <begin position="280"/>
        <end position="290"/>
    </location>
</feature>
<feature type="modified residue" description="Phosphoserine; by PKA" evidence="2">
    <location>
        <position position="301"/>
    </location>
</feature>
<feature type="glycosylation site" description="N-linked (GlcNAc...) asparagine" evidence="3">
    <location>
        <position position="38"/>
    </location>
</feature>
<feature type="glycosylation site" description="N-linked (GlcNAc...) asparagine" evidence="3">
    <location>
        <position position="45"/>
    </location>
</feature>
<feature type="glycosylation site" description="N-linked (GlcNAc...) asparagine" evidence="3">
    <location>
        <position position="51"/>
    </location>
</feature>
<feature type="glycosylation site" description="N-linked (GlcNAc...) asparagine" evidence="3">
    <location>
        <position position="78"/>
    </location>
</feature>
<feature type="glycosylation site" description="N-linked (GlcNAc...) asparagine" evidence="3">
    <location>
        <position position="90"/>
    </location>
</feature>
<feature type="glycosylation site" description="N-linked (GlcNAc...) asparagine" evidence="3">
    <location>
        <position position="98"/>
    </location>
</feature>
<feature type="disulfide bond" evidence="1">
    <location>
        <begin position="30"/>
        <end position="54"/>
    </location>
</feature>
<feature type="disulfide bond" evidence="1">
    <location>
        <begin position="44"/>
        <end position="87"/>
    </location>
</feature>
<feature type="disulfide bond" evidence="1">
    <location>
        <begin position="68"/>
        <end position="102"/>
    </location>
</feature>
<feature type="disulfide bond" evidence="1">
    <location>
        <begin position="188"/>
        <end position="258"/>
    </location>
</feature>
<dbReference type="EMBL" id="AF054582">
    <property type="protein sequence ID" value="AAC08027.1"/>
    <property type="molecule type" value="mRNA"/>
</dbReference>
<dbReference type="RefSeq" id="NP_001009727.1">
    <property type="nucleotide sequence ID" value="NM_001009727.1"/>
</dbReference>
<dbReference type="SMR" id="O62772"/>
<dbReference type="STRING" id="9940.ENSOARP00000011973"/>
<dbReference type="GlyCosmos" id="O62772">
    <property type="glycosylation" value="6 sites, No reported glycans"/>
</dbReference>
<dbReference type="GeneID" id="443025"/>
<dbReference type="KEGG" id="oas:443025"/>
<dbReference type="CTD" id="1394"/>
<dbReference type="OrthoDB" id="6022368at2759"/>
<dbReference type="Proteomes" id="UP000002356">
    <property type="component" value="Unplaced"/>
</dbReference>
<dbReference type="GO" id="GO:0005768">
    <property type="term" value="C:endosome"/>
    <property type="evidence" value="ECO:0007669"/>
    <property type="project" value="UniProtKB-SubCell"/>
</dbReference>
<dbReference type="GO" id="GO:0043005">
    <property type="term" value="C:neuron projection"/>
    <property type="evidence" value="ECO:0007669"/>
    <property type="project" value="TreeGrafter"/>
</dbReference>
<dbReference type="GO" id="GO:0005886">
    <property type="term" value="C:plasma membrane"/>
    <property type="evidence" value="ECO:0000250"/>
    <property type="project" value="UniProtKB"/>
</dbReference>
<dbReference type="GO" id="GO:0015056">
    <property type="term" value="F:corticotrophin-releasing factor receptor activity"/>
    <property type="evidence" value="ECO:0000250"/>
    <property type="project" value="UniProtKB"/>
</dbReference>
<dbReference type="GO" id="GO:0051424">
    <property type="term" value="F:corticotropin-releasing hormone binding"/>
    <property type="evidence" value="ECO:0007669"/>
    <property type="project" value="TreeGrafter"/>
</dbReference>
<dbReference type="GO" id="GO:0043404">
    <property type="term" value="F:corticotropin-releasing hormone receptor activity"/>
    <property type="evidence" value="ECO:0007669"/>
    <property type="project" value="TreeGrafter"/>
</dbReference>
<dbReference type="GO" id="GO:0008528">
    <property type="term" value="F:G protein-coupled peptide receptor activity"/>
    <property type="evidence" value="ECO:0007669"/>
    <property type="project" value="TreeGrafter"/>
</dbReference>
<dbReference type="GO" id="GO:0007189">
    <property type="term" value="P:adenylate cyclase-activating G protein-coupled receptor signaling pathway"/>
    <property type="evidence" value="ECO:0000250"/>
    <property type="project" value="UniProtKB"/>
</dbReference>
<dbReference type="GO" id="GO:0007166">
    <property type="term" value="P:cell surface receptor signaling pathway"/>
    <property type="evidence" value="ECO:0007669"/>
    <property type="project" value="InterPro"/>
</dbReference>
<dbReference type="GO" id="GO:0071376">
    <property type="term" value="P:cellular response to corticotropin-releasing hormone stimulus"/>
    <property type="evidence" value="ECO:0000250"/>
    <property type="project" value="UniProtKB"/>
</dbReference>
<dbReference type="GO" id="GO:0051458">
    <property type="term" value="P:corticotropin secretion"/>
    <property type="evidence" value="ECO:0000250"/>
    <property type="project" value="UniProtKB"/>
</dbReference>
<dbReference type="GO" id="GO:2000852">
    <property type="term" value="P:regulation of corticosterone secretion"/>
    <property type="evidence" value="ECO:0000250"/>
    <property type="project" value="UniProtKB"/>
</dbReference>
<dbReference type="CDD" id="cd15445">
    <property type="entry name" value="7tmB1_CRF-R1"/>
    <property type="match status" value="1"/>
</dbReference>
<dbReference type="FunFam" id="1.20.1070.10:FF:000021">
    <property type="entry name" value="Corticotropin releasing factor receptor 2"/>
    <property type="match status" value="1"/>
</dbReference>
<dbReference type="FunFam" id="4.10.1240.10:FF:000007">
    <property type="entry name" value="Corticotropin-releasing factor receptor 1"/>
    <property type="match status" value="1"/>
</dbReference>
<dbReference type="Gene3D" id="4.10.1240.10">
    <property type="entry name" value="GPCR, family 2, extracellular hormone receptor domain"/>
    <property type="match status" value="1"/>
</dbReference>
<dbReference type="Gene3D" id="1.20.1070.10">
    <property type="entry name" value="Rhodopsin 7-helix transmembrane proteins"/>
    <property type="match status" value="1"/>
</dbReference>
<dbReference type="InterPro" id="IPR050332">
    <property type="entry name" value="GPCR_2"/>
</dbReference>
<dbReference type="InterPro" id="IPR017981">
    <property type="entry name" value="GPCR_2-like_7TM"/>
</dbReference>
<dbReference type="InterPro" id="IPR003052">
    <property type="entry name" value="GPCR_2_CRF1_rcpt"/>
</dbReference>
<dbReference type="InterPro" id="IPR003051">
    <property type="entry name" value="GPCR_2_CRF_rcpt"/>
</dbReference>
<dbReference type="InterPro" id="IPR036445">
    <property type="entry name" value="GPCR_2_extracell_dom_sf"/>
</dbReference>
<dbReference type="InterPro" id="IPR001879">
    <property type="entry name" value="GPCR_2_extracellular_dom"/>
</dbReference>
<dbReference type="InterPro" id="IPR000832">
    <property type="entry name" value="GPCR_2_secretin-like"/>
</dbReference>
<dbReference type="InterPro" id="IPR017983">
    <property type="entry name" value="GPCR_2_secretin-like_CS"/>
</dbReference>
<dbReference type="PANTHER" id="PTHR45620:SF2">
    <property type="entry name" value="CORTICOTROPIN-RELEASING FACTOR RECEPTOR 1"/>
    <property type="match status" value="1"/>
</dbReference>
<dbReference type="PANTHER" id="PTHR45620">
    <property type="entry name" value="PDF RECEPTOR-LIKE PROTEIN-RELATED"/>
    <property type="match status" value="1"/>
</dbReference>
<dbReference type="Pfam" id="PF00002">
    <property type="entry name" value="7tm_2"/>
    <property type="match status" value="1"/>
</dbReference>
<dbReference type="Pfam" id="PF02793">
    <property type="entry name" value="HRM"/>
    <property type="match status" value="1"/>
</dbReference>
<dbReference type="PRINTS" id="PR01279">
    <property type="entry name" value="CRFRECEPTOR"/>
</dbReference>
<dbReference type="PRINTS" id="PR01280">
    <property type="entry name" value="CRFRECEPTOR1"/>
</dbReference>
<dbReference type="PRINTS" id="PR00249">
    <property type="entry name" value="GPCRSECRETIN"/>
</dbReference>
<dbReference type="SMART" id="SM00008">
    <property type="entry name" value="HormR"/>
    <property type="match status" value="1"/>
</dbReference>
<dbReference type="SUPFAM" id="SSF81321">
    <property type="entry name" value="Family A G protein-coupled receptor-like"/>
    <property type="match status" value="1"/>
</dbReference>
<dbReference type="SUPFAM" id="SSF111418">
    <property type="entry name" value="Hormone receptor domain"/>
    <property type="match status" value="1"/>
</dbReference>
<dbReference type="PROSITE" id="PS00650">
    <property type="entry name" value="G_PROTEIN_RECEP_F2_2"/>
    <property type="match status" value="1"/>
</dbReference>
<dbReference type="PROSITE" id="PS50227">
    <property type="entry name" value="G_PROTEIN_RECEP_F2_3"/>
    <property type="match status" value="1"/>
</dbReference>
<dbReference type="PROSITE" id="PS50261">
    <property type="entry name" value="G_PROTEIN_RECEP_F2_4"/>
    <property type="match status" value="1"/>
</dbReference>
<organism>
    <name type="scientific">Ovis aries</name>
    <name type="common">Sheep</name>
    <dbReference type="NCBI Taxonomy" id="9940"/>
    <lineage>
        <taxon>Eukaryota</taxon>
        <taxon>Metazoa</taxon>
        <taxon>Chordata</taxon>
        <taxon>Craniata</taxon>
        <taxon>Vertebrata</taxon>
        <taxon>Euteleostomi</taxon>
        <taxon>Mammalia</taxon>
        <taxon>Eutheria</taxon>
        <taxon>Laurasiatheria</taxon>
        <taxon>Artiodactyla</taxon>
        <taxon>Ruminantia</taxon>
        <taxon>Pecora</taxon>
        <taxon>Bovidae</taxon>
        <taxon>Caprinae</taxon>
        <taxon>Ovis</taxon>
    </lineage>
</organism>
<reference key="1">
    <citation type="journal article" date="1998" name="Mol. Cell. Endocrinol.">
        <title>Structure and function of the ovine type 1 corticotropin releasing factor receptor (CRF1) and a carboxyl-terminal variant.</title>
        <authorList>
            <person name="Myers D.A."/>
            <person name="Trinh J.V."/>
            <person name="Myers T.R."/>
        </authorList>
    </citation>
    <scope>NUCLEOTIDE SEQUENCE [MRNA]</scope>
    <scope>FUNCTION</scope>
    <scope>SUBCELLULAR LOCATION</scope>
    <source>
        <tissue>Pituitary</tissue>
    </source>
</reference>